<sequence>MSNYFDKIEKVKYEGADSTNPFAFKHYNPNEVILGKTMAEHLRLAVCYWHTFCWTGNDMFGVGSLDRSWQKTGDLLEGAKQKAEIAFEFFQKLGIPYYCFHDVDIAPEGNSYKEYVHNFHTMVDILEKKQAETGVKLLWGTANCFTNPRYMSGASTNPNPEVFSWAASQVFNAMNATKRLGGENYVLWGGREGYETLLNTDLKREREQIGRFMQMVVEHKHKIGFNGTLLIEPKPQEPTKHQYDYDVATVYGFLKQFGLEKEIKVNIEANHATLAGHTFQHEIATAAALDIFGSIDANRGDPQLGWDTDQFPNSVEENTLVMYEILKAGGFTTGGFNFDAKIRRQSTDPYDLFHGHIGAIDVLALSLKRAAKMIEDKTLQGIVDQRYAGWNGDLGQQILAGKASLEDLAKIVESKALDPKPVSGQQEYLENLVNNYIYR</sequence>
<comment type="catalytic activity">
    <reaction evidence="1">
        <text>alpha-D-xylose = alpha-D-xylulofuranose</text>
        <dbReference type="Rhea" id="RHEA:22816"/>
        <dbReference type="ChEBI" id="CHEBI:28518"/>
        <dbReference type="ChEBI" id="CHEBI:188998"/>
        <dbReference type="EC" id="5.3.1.5"/>
    </reaction>
</comment>
<comment type="cofactor">
    <cofactor evidence="1">
        <name>Mg(2+)</name>
        <dbReference type="ChEBI" id="CHEBI:18420"/>
    </cofactor>
    <text evidence="1">Binds 2 magnesium ions per subunit.</text>
</comment>
<comment type="subunit">
    <text evidence="1">Homotetramer.</text>
</comment>
<comment type="subcellular location">
    <subcellularLocation>
        <location evidence="1">Cytoplasm</location>
    </subcellularLocation>
</comment>
<comment type="similarity">
    <text evidence="1">Belongs to the xylose isomerase family.</text>
</comment>
<name>XYLA_ACTP7</name>
<accession>B3H2X9</accession>
<reference key="1">
    <citation type="submission" date="2008-06" db="EMBL/GenBank/DDBJ databases">
        <title>Genome and proteome analysis of A. pleuropneumoniae serotype 7.</title>
        <authorList>
            <person name="Linke B."/>
            <person name="Buettner F."/>
            <person name="Martinez-Arias R."/>
            <person name="Goesmann A."/>
            <person name="Baltes N."/>
            <person name="Tegetmeyer H."/>
            <person name="Singh M."/>
            <person name="Gerlach G.F."/>
        </authorList>
    </citation>
    <scope>NUCLEOTIDE SEQUENCE [LARGE SCALE GENOMIC DNA]</scope>
    <source>
        <strain>AP76</strain>
    </source>
</reference>
<organism>
    <name type="scientific">Actinobacillus pleuropneumoniae serotype 7 (strain AP76)</name>
    <dbReference type="NCBI Taxonomy" id="537457"/>
    <lineage>
        <taxon>Bacteria</taxon>
        <taxon>Pseudomonadati</taxon>
        <taxon>Pseudomonadota</taxon>
        <taxon>Gammaproteobacteria</taxon>
        <taxon>Pasteurellales</taxon>
        <taxon>Pasteurellaceae</taxon>
        <taxon>Actinobacillus</taxon>
    </lineage>
</organism>
<keyword id="KW-0119">Carbohydrate metabolism</keyword>
<keyword id="KW-0963">Cytoplasm</keyword>
<keyword id="KW-0413">Isomerase</keyword>
<keyword id="KW-0460">Magnesium</keyword>
<keyword id="KW-0479">Metal-binding</keyword>
<keyword id="KW-0859">Xylose metabolism</keyword>
<protein>
    <recommendedName>
        <fullName evidence="1">Xylose isomerase</fullName>
        <ecNumber evidence="1">5.3.1.5</ecNumber>
    </recommendedName>
</protein>
<gene>
    <name evidence="1" type="primary">xylA</name>
    <name type="ordered locus">APP7_1997</name>
</gene>
<proteinExistence type="inferred from homology"/>
<feature type="chain" id="PRO_1000200273" description="Xylose isomerase">
    <location>
        <begin position="1"/>
        <end position="439"/>
    </location>
</feature>
<feature type="active site" evidence="1">
    <location>
        <position position="101"/>
    </location>
</feature>
<feature type="active site" evidence="1">
    <location>
        <position position="104"/>
    </location>
</feature>
<feature type="binding site" evidence="1">
    <location>
        <position position="232"/>
    </location>
    <ligand>
        <name>Mg(2+)</name>
        <dbReference type="ChEBI" id="CHEBI:18420"/>
        <label>1</label>
    </ligand>
</feature>
<feature type="binding site" evidence="1">
    <location>
        <position position="268"/>
    </location>
    <ligand>
        <name>Mg(2+)</name>
        <dbReference type="ChEBI" id="CHEBI:18420"/>
        <label>1</label>
    </ligand>
</feature>
<feature type="binding site" evidence="1">
    <location>
        <position position="268"/>
    </location>
    <ligand>
        <name>Mg(2+)</name>
        <dbReference type="ChEBI" id="CHEBI:18420"/>
        <label>2</label>
    </ligand>
</feature>
<feature type="binding site" evidence="1">
    <location>
        <position position="271"/>
    </location>
    <ligand>
        <name>Mg(2+)</name>
        <dbReference type="ChEBI" id="CHEBI:18420"/>
        <label>2</label>
    </ligand>
</feature>
<feature type="binding site" evidence="1">
    <location>
        <position position="296"/>
    </location>
    <ligand>
        <name>Mg(2+)</name>
        <dbReference type="ChEBI" id="CHEBI:18420"/>
        <label>1</label>
    </ligand>
</feature>
<feature type="binding site" evidence="1">
    <location>
        <position position="307"/>
    </location>
    <ligand>
        <name>Mg(2+)</name>
        <dbReference type="ChEBI" id="CHEBI:18420"/>
        <label>2</label>
    </ligand>
</feature>
<feature type="binding site" evidence="1">
    <location>
        <position position="309"/>
    </location>
    <ligand>
        <name>Mg(2+)</name>
        <dbReference type="ChEBI" id="CHEBI:18420"/>
        <label>2</label>
    </ligand>
</feature>
<feature type="binding site" evidence="1">
    <location>
        <position position="339"/>
    </location>
    <ligand>
        <name>Mg(2+)</name>
        <dbReference type="ChEBI" id="CHEBI:18420"/>
        <label>1</label>
    </ligand>
</feature>
<dbReference type="EC" id="5.3.1.5" evidence="1"/>
<dbReference type="EMBL" id="CP001091">
    <property type="protein sequence ID" value="ACE62649.1"/>
    <property type="molecule type" value="Genomic_DNA"/>
</dbReference>
<dbReference type="RefSeq" id="WP_005599638.1">
    <property type="nucleotide sequence ID" value="NC_010939.1"/>
</dbReference>
<dbReference type="SMR" id="B3H2X9"/>
<dbReference type="GeneID" id="48600213"/>
<dbReference type="KEGG" id="apa:APP7_1997"/>
<dbReference type="HOGENOM" id="CLU_037261_1_0_6"/>
<dbReference type="Proteomes" id="UP000001226">
    <property type="component" value="Chromosome"/>
</dbReference>
<dbReference type="GO" id="GO:0005737">
    <property type="term" value="C:cytoplasm"/>
    <property type="evidence" value="ECO:0007669"/>
    <property type="project" value="UniProtKB-SubCell"/>
</dbReference>
<dbReference type="GO" id="GO:0000287">
    <property type="term" value="F:magnesium ion binding"/>
    <property type="evidence" value="ECO:0007669"/>
    <property type="project" value="UniProtKB-UniRule"/>
</dbReference>
<dbReference type="GO" id="GO:0009045">
    <property type="term" value="F:xylose isomerase activity"/>
    <property type="evidence" value="ECO:0007669"/>
    <property type="project" value="UniProtKB-UniRule"/>
</dbReference>
<dbReference type="GO" id="GO:0042732">
    <property type="term" value="P:D-xylose metabolic process"/>
    <property type="evidence" value="ECO:0007669"/>
    <property type="project" value="UniProtKB-UniRule"/>
</dbReference>
<dbReference type="FunFam" id="3.20.20.150:FF:000002">
    <property type="entry name" value="Xylose isomerase"/>
    <property type="match status" value="1"/>
</dbReference>
<dbReference type="Gene3D" id="3.20.20.150">
    <property type="entry name" value="Divalent-metal-dependent TIM barrel enzymes"/>
    <property type="match status" value="1"/>
</dbReference>
<dbReference type="HAMAP" id="MF_00455">
    <property type="entry name" value="Xylose_isom_A"/>
    <property type="match status" value="1"/>
</dbReference>
<dbReference type="InterPro" id="IPR036237">
    <property type="entry name" value="Xyl_isomerase-like_sf"/>
</dbReference>
<dbReference type="InterPro" id="IPR013452">
    <property type="entry name" value="Xylose_isom_bac"/>
</dbReference>
<dbReference type="InterPro" id="IPR001998">
    <property type="entry name" value="Xylose_isomerase"/>
</dbReference>
<dbReference type="NCBIfam" id="NF003998">
    <property type="entry name" value="PRK05474.1"/>
    <property type="match status" value="1"/>
</dbReference>
<dbReference type="NCBIfam" id="TIGR02630">
    <property type="entry name" value="xylose_isom_A"/>
    <property type="match status" value="1"/>
</dbReference>
<dbReference type="PANTHER" id="PTHR48408">
    <property type="match status" value="1"/>
</dbReference>
<dbReference type="PANTHER" id="PTHR48408:SF1">
    <property type="entry name" value="XYLOSE ISOMERASE"/>
    <property type="match status" value="1"/>
</dbReference>
<dbReference type="PRINTS" id="PR00688">
    <property type="entry name" value="XYLOSISMRASE"/>
</dbReference>
<dbReference type="SUPFAM" id="SSF51658">
    <property type="entry name" value="Xylose isomerase-like"/>
    <property type="match status" value="1"/>
</dbReference>
<dbReference type="PROSITE" id="PS51415">
    <property type="entry name" value="XYLOSE_ISOMERASE"/>
    <property type="match status" value="1"/>
</dbReference>
<evidence type="ECO:0000255" key="1">
    <source>
        <dbReference type="HAMAP-Rule" id="MF_00455"/>
    </source>
</evidence>